<gene>
    <name type="ordered locus">At5g61370</name>
    <name type="ORF">MFB13.15</name>
</gene>
<sequence length="487" mass="55549">MMSTTVRLNRFTYLTSTAKLTRYFCSHHLVDRSETALHEVIRIVSSPVGGLDDLEENLNQVSVSPSSNLVTQVIESCKNETSPRRLLRFFSWSCKSLGSSLHDKEFNYVLRVLAEKKDHTAMQILLSDLRKENRAMDKQTFSIVAETLVKVGKEEDAIGIFKILDKFSCPQDGFTVTAIISALCSRGHVKRALGVMHHHKDVISGNELSVYRSLLFGWSVQRNVKEARRVIQDMKSAGITPDLFCFNSLLTCLCERNVNRNPSGLVPEALNIMLEMRSYKIQPTSMSYNILLSCLGRTRRVRESCQILEQMKRSGCDPDTGSYYFVVRVLYLTGRFGKGNQIVDEMIERGFRPERKFYYDLIGVLCGVERVNFALQLFEKMKRSSVGGYGQVYDLLIPKLCKGGNFEKGRELWEEALSIDVTLSCSISLLDPSVTEVFKPMKMKEEAAMVDRRALNLKIHARMNKTKPKLKLKPKRRSKTKKKNLQH</sequence>
<keyword id="KW-0496">Mitochondrion</keyword>
<keyword id="KW-1185">Reference proteome</keyword>
<keyword id="KW-0677">Repeat</keyword>
<keyword id="KW-0809">Transit peptide</keyword>
<proteinExistence type="evidence at transcript level"/>
<reference key="1">
    <citation type="journal article" date="1998" name="DNA Res.">
        <title>Structural analysis of Arabidopsis thaliana chromosome 5. IV. Sequence features of the regions of 1,456,315 bp covered by nineteen physically assigned P1 and TAC clones.</title>
        <authorList>
            <person name="Sato S."/>
            <person name="Kaneko T."/>
            <person name="Kotani H."/>
            <person name="Nakamura Y."/>
            <person name="Asamizu E."/>
            <person name="Miyajima N."/>
            <person name="Tabata S."/>
        </authorList>
    </citation>
    <scope>NUCLEOTIDE SEQUENCE [LARGE SCALE GENOMIC DNA]</scope>
    <source>
        <strain>cv. Columbia</strain>
    </source>
</reference>
<reference key="2">
    <citation type="journal article" date="2017" name="Plant J.">
        <title>Araport11: a complete reannotation of the Arabidopsis thaliana reference genome.</title>
        <authorList>
            <person name="Cheng C.Y."/>
            <person name="Krishnakumar V."/>
            <person name="Chan A.P."/>
            <person name="Thibaud-Nissen F."/>
            <person name="Schobel S."/>
            <person name="Town C.D."/>
        </authorList>
    </citation>
    <scope>GENOME REANNOTATION</scope>
    <source>
        <strain>cv. Columbia</strain>
    </source>
</reference>
<reference key="3">
    <citation type="journal article" date="2003" name="Science">
        <title>Empirical analysis of transcriptional activity in the Arabidopsis genome.</title>
        <authorList>
            <person name="Yamada K."/>
            <person name="Lim J."/>
            <person name="Dale J.M."/>
            <person name="Chen H."/>
            <person name="Shinn P."/>
            <person name="Palm C.J."/>
            <person name="Southwick A.M."/>
            <person name="Wu H.C."/>
            <person name="Kim C.J."/>
            <person name="Nguyen M."/>
            <person name="Pham P.K."/>
            <person name="Cheuk R.F."/>
            <person name="Karlin-Newmann G."/>
            <person name="Liu S.X."/>
            <person name="Lam B."/>
            <person name="Sakano H."/>
            <person name="Wu T."/>
            <person name="Yu G."/>
            <person name="Miranda M."/>
            <person name="Quach H.L."/>
            <person name="Tripp M."/>
            <person name="Chang C.H."/>
            <person name="Lee J.M."/>
            <person name="Toriumi M.J."/>
            <person name="Chan M.M."/>
            <person name="Tang C.C."/>
            <person name="Onodera C.S."/>
            <person name="Deng J.M."/>
            <person name="Akiyama K."/>
            <person name="Ansari Y."/>
            <person name="Arakawa T."/>
            <person name="Banh J."/>
            <person name="Banno F."/>
            <person name="Bowser L."/>
            <person name="Brooks S.Y."/>
            <person name="Carninci P."/>
            <person name="Chao Q."/>
            <person name="Choy N."/>
            <person name="Enju A."/>
            <person name="Goldsmith A.D."/>
            <person name="Gurjal M."/>
            <person name="Hansen N.F."/>
            <person name="Hayashizaki Y."/>
            <person name="Johnson-Hopson C."/>
            <person name="Hsuan V.W."/>
            <person name="Iida K."/>
            <person name="Karnes M."/>
            <person name="Khan S."/>
            <person name="Koesema E."/>
            <person name="Ishida J."/>
            <person name="Jiang P.X."/>
            <person name="Jones T."/>
            <person name="Kawai J."/>
            <person name="Kamiya A."/>
            <person name="Meyers C."/>
            <person name="Nakajima M."/>
            <person name="Narusaka M."/>
            <person name="Seki M."/>
            <person name="Sakurai T."/>
            <person name="Satou M."/>
            <person name="Tamse R."/>
            <person name="Vaysberg M."/>
            <person name="Wallender E.K."/>
            <person name="Wong C."/>
            <person name="Yamamura Y."/>
            <person name="Yuan S."/>
            <person name="Shinozaki K."/>
            <person name="Davis R.W."/>
            <person name="Theologis A."/>
            <person name="Ecker J.R."/>
        </authorList>
    </citation>
    <scope>NUCLEOTIDE SEQUENCE [LARGE SCALE MRNA]</scope>
    <source>
        <strain>cv. Columbia</strain>
    </source>
</reference>
<reference key="4">
    <citation type="submission" date="2002-03" db="EMBL/GenBank/DDBJ databases">
        <title>Full-length cDNA from Arabidopsis thaliana.</title>
        <authorList>
            <person name="Brover V.V."/>
            <person name="Troukhan M.E."/>
            <person name="Alexandrov N.A."/>
            <person name="Lu Y.-P."/>
            <person name="Flavell R.B."/>
            <person name="Feldmann K.A."/>
        </authorList>
    </citation>
    <scope>NUCLEOTIDE SEQUENCE [LARGE SCALE MRNA]</scope>
</reference>
<reference key="5">
    <citation type="journal article" date="2004" name="Plant Cell">
        <title>Genome-wide analysis of Arabidopsis pentatricopeptide repeat proteins reveals their essential role in organelle biogenesis.</title>
        <authorList>
            <person name="Lurin C."/>
            <person name="Andres C."/>
            <person name="Aubourg S."/>
            <person name="Bellaoui M."/>
            <person name="Bitton F."/>
            <person name="Bruyere C."/>
            <person name="Caboche M."/>
            <person name="Debast C."/>
            <person name="Gualberto J."/>
            <person name="Hoffmann B."/>
            <person name="Lecharny A."/>
            <person name="Le Ret M."/>
            <person name="Martin-Magniette M.-L."/>
            <person name="Mireau H."/>
            <person name="Peeters N."/>
            <person name="Renou J.-P."/>
            <person name="Szurek B."/>
            <person name="Taconnat L."/>
            <person name="Small I."/>
        </authorList>
    </citation>
    <scope>GENE FAMILY</scope>
</reference>
<accession>Q9FLJ6</accession>
<accession>Q8LAI6</accession>
<organism>
    <name type="scientific">Arabidopsis thaliana</name>
    <name type="common">Mouse-ear cress</name>
    <dbReference type="NCBI Taxonomy" id="3702"/>
    <lineage>
        <taxon>Eukaryota</taxon>
        <taxon>Viridiplantae</taxon>
        <taxon>Streptophyta</taxon>
        <taxon>Embryophyta</taxon>
        <taxon>Tracheophyta</taxon>
        <taxon>Spermatophyta</taxon>
        <taxon>Magnoliopsida</taxon>
        <taxon>eudicotyledons</taxon>
        <taxon>Gunneridae</taxon>
        <taxon>Pentapetalae</taxon>
        <taxon>rosids</taxon>
        <taxon>malvids</taxon>
        <taxon>Brassicales</taxon>
        <taxon>Brassicaceae</taxon>
        <taxon>Camelineae</taxon>
        <taxon>Arabidopsis</taxon>
    </lineage>
</organism>
<name>PP439_ARATH</name>
<dbReference type="EMBL" id="AB010073">
    <property type="protein sequence ID" value="BAB08492.1"/>
    <property type="molecule type" value="Genomic_DNA"/>
</dbReference>
<dbReference type="EMBL" id="CP002688">
    <property type="protein sequence ID" value="AED97459.1"/>
    <property type="molecule type" value="Genomic_DNA"/>
</dbReference>
<dbReference type="EMBL" id="AY065266">
    <property type="protein sequence ID" value="AAL38742.1"/>
    <property type="molecule type" value="mRNA"/>
</dbReference>
<dbReference type="EMBL" id="AY142659">
    <property type="protein sequence ID" value="AAN13197.1"/>
    <property type="molecule type" value="mRNA"/>
</dbReference>
<dbReference type="EMBL" id="AY087789">
    <property type="protein sequence ID" value="AAM65325.1"/>
    <property type="molecule type" value="mRNA"/>
</dbReference>
<dbReference type="RefSeq" id="NP_200945.1">
    <property type="nucleotide sequence ID" value="NM_125530.3"/>
</dbReference>
<dbReference type="SMR" id="Q9FLJ6"/>
<dbReference type="FunCoup" id="Q9FLJ6">
    <property type="interactions" value="97"/>
</dbReference>
<dbReference type="STRING" id="3702.Q9FLJ6"/>
<dbReference type="PaxDb" id="3702-AT5G61370.1"/>
<dbReference type="EnsemblPlants" id="AT5G61370.1">
    <property type="protein sequence ID" value="AT5G61370.1"/>
    <property type="gene ID" value="AT5G61370"/>
</dbReference>
<dbReference type="GeneID" id="836258"/>
<dbReference type="Gramene" id="AT5G61370.1">
    <property type="protein sequence ID" value="AT5G61370.1"/>
    <property type="gene ID" value="AT5G61370"/>
</dbReference>
<dbReference type="KEGG" id="ath:AT5G61370"/>
<dbReference type="Araport" id="AT5G61370"/>
<dbReference type="TAIR" id="AT5G61370"/>
<dbReference type="eggNOG" id="KOG4197">
    <property type="taxonomic scope" value="Eukaryota"/>
</dbReference>
<dbReference type="HOGENOM" id="CLU_044926_0_0_1"/>
<dbReference type="InParanoid" id="Q9FLJ6"/>
<dbReference type="OMA" id="DRKFYYD"/>
<dbReference type="PhylomeDB" id="Q9FLJ6"/>
<dbReference type="PRO" id="PR:Q9FLJ6"/>
<dbReference type="Proteomes" id="UP000006548">
    <property type="component" value="Chromosome 5"/>
</dbReference>
<dbReference type="ExpressionAtlas" id="Q9FLJ6">
    <property type="expression patterns" value="baseline and differential"/>
</dbReference>
<dbReference type="GO" id="GO:0005739">
    <property type="term" value="C:mitochondrion"/>
    <property type="evidence" value="ECO:0007005"/>
    <property type="project" value="TAIR"/>
</dbReference>
<dbReference type="FunFam" id="1.25.40.10:FF:000910">
    <property type="entry name" value="Pentatricopeptide repeat-containing protein At5g14080"/>
    <property type="match status" value="1"/>
</dbReference>
<dbReference type="Gene3D" id="1.25.40.10">
    <property type="entry name" value="Tetratricopeptide repeat domain"/>
    <property type="match status" value="2"/>
</dbReference>
<dbReference type="InterPro" id="IPR002885">
    <property type="entry name" value="Pentatricopeptide_rpt"/>
</dbReference>
<dbReference type="InterPro" id="IPR011990">
    <property type="entry name" value="TPR-like_helical_dom_sf"/>
</dbReference>
<dbReference type="NCBIfam" id="TIGR00756">
    <property type="entry name" value="PPR"/>
    <property type="match status" value="2"/>
</dbReference>
<dbReference type="PANTHER" id="PTHR47931">
    <property type="entry name" value="OS01G0228400 PROTEIN"/>
    <property type="match status" value="1"/>
</dbReference>
<dbReference type="PANTHER" id="PTHR47931:SF2">
    <property type="entry name" value="OS01G0228400 PROTEIN"/>
    <property type="match status" value="1"/>
</dbReference>
<dbReference type="Pfam" id="PF01535">
    <property type="entry name" value="PPR"/>
    <property type="match status" value="2"/>
</dbReference>
<dbReference type="Pfam" id="PF13041">
    <property type="entry name" value="PPR_2"/>
    <property type="match status" value="2"/>
</dbReference>
<dbReference type="PROSITE" id="PS51375">
    <property type="entry name" value="PPR"/>
    <property type="match status" value="8"/>
</dbReference>
<feature type="transit peptide" description="Mitochondrion" evidence="1">
    <location>
        <begin position="1"/>
        <end position="90"/>
    </location>
</feature>
<feature type="chain" id="PRO_0000363576" description="Pentatricopeptide repeat-containing protein At5g61370, mitochondrial">
    <location>
        <begin position="91"/>
        <end position="487"/>
    </location>
</feature>
<feature type="repeat" description="PPR 1">
    <location>
        <begin position="137"/>
        <end position="171"/>
    </location>
</feature>
<feature type="repeat" description="PPR 2">
    <location>
        <begin position="172"/>
        <end position="202"/>
    </location>
</feature>
<feature type="repeat" description="PPR 3">
    <location>
        <begin position="207"/>
        <end position="241"/>
    </location>
</feature>
<feature type="repeat" description="PPR 4">
    <location>
        <begin position="242"/>
        <end position="283"/>
    </location>
</feature>
<feature type="repeat" description="PPR 5">
    <location>
        <begin position="284"/>
        <end position="318"/>
    </location>
</feature>
<feature type="repeat" description="PPR 6">
    <location>
        <begin position="319"/>
        <end position="353"/>
    </location>
</feature>
<feature type="repeat" description="PPR 7">
    <location>
        <begin position="354"/>
        <end position="388"/>
    </location>
</feature>
<feature type="repeat" description="PPR 8">
    <location>
        <begin position="389"/>
        <end position="423"/>
    </location>
</feature>
<feature type="region of interest" description="Disordered" evidence="2">
    <location>
        <begin position="466"/>
        <end position="487"/>
    </location>
</feature>
<feature type="sequence conflict" description="In Ref. 4; AAM65325." evidence="3" ref="4">
    <original>V</original>
    <variation>I</variation>
    <location>
        <position position="151"/>
    </location>
</feature>
<protein>
    <recommendedName>
        <fullName>Pentatricopeptide repeat-containing protein At5g61370, mitochondrial</fullName>
    </recommendedName>
</protein>
<evidence type="ECO:0000255" key="1"/>
<evidence type="ECO:0000256" key="2">
    <source>
        <dbReference type="SAM" id="MobiDB-lite"/>
    </source>
</evidence>
<evidence type="ECO:0000305" key="3"/>
<comment type="subcellular location">
    <subcellularLocation>
        <location evidence="3">Mitochondrion</location>
    </subcellularLocation>
</comment>
<comment type="similarity">
    <text evidence="3">Belongs to the PPR family. P subfamily.</text>
</comment>
<comment type="online information" name="Pentatricopeptide repeat proteins">
    <link uri="https://ppr.plantenergy.uwa.edu.au"/>
</comment>